<keyword id="KW-0150">Chloroplast</keyword>
<keyword id="KW-0934">Plastid</keyword>
<keyword id="KW-0687">Ribonucleoprotein</keyword>
<keyword id="KW-0689">Ribosomal protein</keyword>
<keyword id="KW-0694">RNA-binding</keyword>
<keyword id="KW-0699">rRNA-binding</keyword>
<sequence length="134" mass="15479">MGKDTIADIITSIRNADMNRKGTVRIGSTNITESIVKILLREGFIENVRKHRENNQYFLILTLRHRRNKKESYKTILNLKRISRPGLRIYSNSQRIPRILGGIGIVILSTSQGIMTDREARLKRIGGEILCYIW</sequence>
<geneLocation type="chloroplast"/>
<feature type="chain" id="PRO_0000290986" description="Small ribosomal subunit protein uS8c">
    <location>
        <begin position="1"/>
        <end position="134"/>
    </location>
</feature>
<reference key="1">
    <citation type="submission" date="2007-03" db="EMBL/GenBank/DDBJ databases">
        <title>Sequencing analysis of Nasturtium officinale chloroplast DNA.</title>
        <authorList>
            <person name="Hosouchi T."/>
            <person name="Tsuruoka H."/>
            <person name="Kotani H."/>
        </authorList>
    </citation>
    <scope>NUCLEOTIDE SEQUENCE [LARGE SCALE GENOMIC DNA]</scope>
</reference>
<accession>A4QLW8</accession>
<gene>
    <name type="primary">rps8</name>
</gene>
<proteinExistence type="inferred from homology"/>
<dbReference type="EMBL" id="AP009376">
    <property type="protein sequence ID" value="BAF50673.1"/>
    <property type="molecule type" value="Genomic_DNA"/>
</dbReference>
<dbReference type="RefSeq" id="YP_001123849.1">
    <property type="nucleotide sequence ID" value="NC_009275.1"/>
</dbReference>
<dbReference type="SMR" id="A4QLW8"/>
<dbReference type="GeneID" id="4962129"/>
<dbReference type="GO" id="GO:0009507">
    <property type="term" value="C:chloroplast"/>
    <property type="evidence" value="ECO:0007669"/>
    <property type="project" value="UniProtKB-SubCell"/>
</dbReference>
<dbReference type="GO" id="GO:1990904">
    <property type="term" value="C:ribonucleoprotein complex"/>
    <property type="evidence" value="ECO:0007669"/>
    <property type="project" value="UniProtKB-KW"/>
</dbReference>
<dbReference type="GO" id="GO:0005840">
    <property type="term" value="C:ribosome"/>
    <property type="evidence" value="ECO:0007669"/>
    <property type="project" value="UniProtKB-KW"/>
</dbReference>
<dbReference type="GO" id="GO:0019843">
    <property type="term" value="F:rRNA binding"/>
    <property type="evidence" value="ECO:0007669"/>
    <property type="project" value="UniProtKB-UniRule"/>
</dbReference>
<dbReference type="GO" id="GO:0003735">
    <property type="term" value="F:structural constituent of ribosome"/>
    <property type="evidence" value="ECO:0007669"/>
    <property type="project" value="InterPro"/>
</dbReference>
<dbReference type="GO" id="GO:0006412">
    <property type="term" value="P:translation"/>
    <property type="evidence" value="ECO:0007669"/>
    <property type="project" value="UniProtKB-UniRule"/>
</dbReference>
<dbReference type="FunFam" id="3.30.1490.10:FF:000001">
    <property type="entry name" value="30S ribosomal protein S8"/>
    <property type="match status" value="1"/>
</dbReference>
<dbReference type="FunFam" id="3.30.1370.30:FF:000004">
    <property type="entry name" value="30S ribosomal protein S8, chloroplastic"/>
    <property type="match status" value="1"/>
</dbReference>
<dbReference type="Gene3D" id="3.30.1370.30">
    <property type="match status" value="1"/>
</dbReference>
<dbReference type="Gene3D" id="3.30.1490.10">
    <property type="match status" value="1"/>
</dbReference>
<dbReference type="HAMAP" id="MF_01302_B">
    <property type="entry name" value="Ribosomal_uS8_B"/>
    <property type="match status" value="1"/>
</dbReference>
<dbReference type="InterPro" id="IPR000630">
    <property type="entry name" value="Ribosomal_uS8"/>
</dbReference>
<dbReference type="InterPro" id="IPR047863">
    <property type="entry name" value="Ribosomal_uS8_CS"/>
</dbReference>
<dbReference type="InterPro" id="IPR035987">
    <property type="entry name" value="Ribosomal_uS8_sf"/>
</dbReference>
<dbReference type="NCBIfam" id="NF001109">
    <property type="entry name" value="PRK00136.1"/>
    <property type="match status" value="1"/>
</dbReference>
<dbReference type="PANTHER" id="PTHR11758">
    <property type="entry name" value="40S RIBOSOMAL PROTEIN S15A"/>
    <property type="match status" value="1"/>
</dbReference>
<dbReference type="Pfam" id="PF00410">
    <property type="entry name" value="Ribosomal_S8"/>
    <property type="match status" value="1"/>
</dbReference>
<dbReference type="SUPFAM" id="SSF56047">
    <property type="entry name" value="Ribosomal protein S8"/>
    <property type="match status" value="1"/>
</dbReference>
<dbReference type="PROSITE" id="PS00053">
    <property type="entry name" value="RIBOSOMAL_S8"/>
    <property type="match status" value="1"/>
</dbReference>
<name>RR8_NASOF</name>
<organism>
    <name type="scientific">Nasturtium officinale</name>
    <name type="common">Watercress</name>
    <name type="synonym">Rorippa nasturtium-aquaticum</name>
    <dbReference type="NCBI Taxonomy" id="65948"/>
    <lineage>
        <taxon>Eukaryota</taxon>
        <taxon>Viridiplantae</taxon>
        <taxon>Streptophyta</taxon>
        <taxon>Embryophyta</taxon>
        <taxon>Tracheophyta</taxon>
        <taxon>Spermatophyta</taxon>
        <taxon>Magnoliopsida</taxon>
        <taxon>eudicotyledons</taxon>
        <taxon>Gunneridae</taxon>
        <taxon>Pentapetalae</taxon>
        <taxon>rosids</taxon>
        <taxon>malvids</taxon>
        <taxon>Brassicales</taxon>
        <taxon>Brassicaceae</taxon>
        <taxon>Cardamineae</taxon>
        <taxon>Nasturtium</taxon>
    </lineage>
</organism>
<protein>
    <recommendedName>
        <fullName evidence="2">Small ribosomal subunit protein uS8c</fullName>
    </recommendedName>
    <alternativeName>
        <fullName>30S ribosomal protein S8, chloroplastic</fullName>
    </alternativeName>
</protein>
<evidence type="ECO:0000250" key="1"/>
<evidence type="ECO:0000305" key="2"/>
<comment type="function">
    <text evidence="1">One of the primary rRNA binding proteins, it binds directly to 16S rRNA central domain where it helps coordinate assembly of the platform of the 30S subunit.</text>
</comment>
<comment type="subunit">
    <text evidence="1">Part of the 30S ribosomal subunit.</text>
</comment>
<comment type="subcellular location">
    <subcellularLocation>
        <location>Plastid</location>
        <location>Chloroplast</location>
    </subcellularLocation>
</comment>
<comment type="similarity">
    <text evidence="2">Belongs to the universal ribosomal protein uS8 family.</text>
</comment>